<organism>
    <name type="scientific">Perisphaeria cf. scabrella (strain SR-2005)</name>
    <name type="common">Cockroach</name>
    <dbReference type="NCBI Taxonomy" id="348759"/>
    <lineage>
        <taxon>Eukaryota</taxon>
        <taxon>Metazoa</taxon>
        <taxon>Ecdysozoa</taxon>
        <taxon>Arthropoda</taxon>
        <taxon>Hexapoda</taxon>
        <taxon>Insecta</taxon>
        <taxon>Pterygota</taxon>
        <taxon>Neoptera</taxon>
        <taxon>Polyneoptera</taxon>
        <taxon>Dictyoptera</taxon>
        <taxon>Blattodea</taxon>
        <taxon>Blaberoidea</taxon>
        <taxon>Blaberidae</taxon>
        <taxon>Perisphaerinae</taxon>
        <taxon>Perisphaeria</taxon>
    </lineage>
</organism>
<dbReference type="GO" id="GO:0005576">
    <property type="term" value="C:extracellular region"/>
    <property type="evidence" value="ECO:0007669"/>
    <property type="project" value="UniProtKB-SubCell"/>
</dbReference>
<dbReference type="GO" id="GO:0007218">
    <property type="term" value="P:neuropeptide signaling pathway"/>
    <property type="evidence" value="ECO:0007669"/>
    <property type="project" value="UniProtKB-KW"/>
</dbReference>
<dbReference type="InterPro" id="IPR013231">
    <property type="entry name" value="Periviscerokinin"/>
</dbReference>
<dbReference type="Pfam" id="PF08259">
    <property type="entry name" value="Periviscerokin"/>
    <property type="match status" value="1"/>
</dbReference>
<protein>
    <recommendedName>
        <fullName evidence="3">Periviscerokinin-2</fullName>
        <shortName evidence="3">PerSc-PVK-2</shortName>
    </recommendedName>
</protein>
<sequence>GSSGLISMPRV</sequence>
<name>PVK2_PERSS</name>
<proteinExistence type="evidence at protein level"/>
<evidence type="ECO:0000255" key="1"/>
<evidence type="ECO:0000269" key="2">
    <source>
    </source>
</evidence>
<evidence type="ECO:0000303" key="3">
    <source>
    </source>
</evidence>
<evidence type="ECO:0000305" key="4"/>
<reference evidence="4" key="1">
    <citation type="journal article" date="2009" name="BMC Evol. Biol.">
        <title>A proteomic approach for studying insect phylogeny: CAPA peptides of ancient insect taxa (Dictyoptera, Blattoptera) as a test case.</title>
        <authorList>
            <person name="Roth S."/>
            <person name="Fromm B."/>
            <person name="Gaede G."/>
            <person name="Predel R."/>
        </authorList>
    </citation>
    <scope>PROTEIN SEQUENCE</scope>
    <scope>AMIDATION AT VAL-11</scope>
    <source>
        <tissue evidence="2">Abdominal perisympathetic organs</tissue>
    </source>
</reference>
<comment type="function">
    <text evidence="4">Mediates visceral muscle contractile activity (myotropic activity).</text>
</comment>
<comment type="subcellular location">
    <subcellularLocation>
        <location evidence="4">Secreted</location>
    </subcellularLocation>
</comment>
<comment type="similarity">
    <text evidence="1">Belongs to the periviscerokinin family.</text>
</comment>
<accession>P85724</accession>
<keyword id="KW-0027">Amidation</keyword>
<keyword id="KW-0903">Direct protein sequencing</keyword>
<keyword id="KW-0527">Neuropeptide</keyword>
<keyword id="KW-0964">Secreted</keyword>
<feature type="peptide" id="PRO_0000378806" description="Periviscerokinin-2" evidence="2">
    <location>
        <begin position="1"/>
        <end position="11"/>
    </location>
</feature>
<feature type="modified residue" description="Valine amide" evidence="2">
    <location>
        <position position="11"/>
    </location>
</feature>